<sequence>MTTSSIRRQMKNIVNNYSEAEIKVREATSNDPWGPSSSLMTEIADLTYNVVAFSEIMSMVWKRLNDHGKNWRHVYKALTLLDYLIKTGSERVAQQCRENIFAIQTLKDFQYIDRDGKDQGINVREKSKQLVALLKDEERLKVERVQALKTKERMAQVATGVGSNQITFGRGSSQPNLSTSYSEQEYGKAGGSPASYHGSTSPRVSSELEQARPQTSGEEELQLQLALAMSREVAEQSSESVQTARGSKEERLRRGDDLRLQMALEESRRDTVKVPKKKEAKACCKPGSHSQQTTLLDLMDALPSSGPVTQKTEPWSAGASANQTNPWGGTVAPSNITDPWPSFGTKPAASVDPWGVPTTASTQSVPKNSDPWAASQQPASNAGKTTDAWGAAKPSSASGSFELFSNFNGTVKDDFSEFDNLRTSKKPAESGASVPPQDSRTTSPDLFESQSLTSASSKPSSARKTPESFLGPNAALVNLDSLVTKPAPPAQSLNPFLAPGAAAPAPVNPFQVNQPQPLTLNQLRGSPVLGSSASFGSGPGVETVAPMTSVAPHSSVGASGSSLTPLGPTAMNMVGSVGIPPSAAQSTGTTNPFLL</sequence>
<keyword id="KW-0025">Alternative splicing</keyword>
<keyword id="KW-0963">Cytoplasm</keyword>
<keyword id="KW-0903">Direct protein sequencing</keyword>
<keyword id="KW-0254">Endocytosis</keyword>
<keyword id="KW-0446">Lipid-binding</keyword>
<keyword id="KW-0488">Methylation</keyword>
<keyword id="KW-0597">Phosphoprotein</keyword>
<keyword id="KW-1185">Reference proteome</keyword>
<keyword id="KW-0677">Repeat</keyword>
<keyword id="KW-0832">Ubl conjugation</keyword>
<feature type="chain" id="PRO_0000074517" description="Epsin-2">
    <location>
        <begin position="1"/>
        <end position="595"/>
    </location>
</feature>
<feature type="domain" description="ENTH" evidence="5">
    <location>
        <begin position="12"/>
        <end position="144"/>
    </location>
</feature>
<feature type="domain" description="UIM 1" evidence="4">
    <location>
        <begin position="218"/>
        <end position="237"/>
    </location>
</feature>
<feature type="domain" description="UIM 2" evidence="4">
    <location>
        <begin position="255"/>
        <end position="274"/>
    </location>
</feature>
<feature type="repeat" description="1">
    <location>
        <begin position="313"/>
        <end position="315"/>
    </location>
</feature>
<feature type="repeat" description="2">
    <location>
        <begin position="325"/>
        <end position="327"/>
    </location>
</feature>
<feature type="repeat" description="3">
    <location>
        <begin position="338"/>
        <end position="340"/>
    </location>
</feature>
<feature type="repeat" description="4">
    <location>
        <begin position="352"/>
        <end position="354"/>
    </location>
</feature>
<feature type="repeat" description="5">
    <location>
        <begin position="370"/>
        <end position="372"/>
    </location>
</feature>
<feature type="repeat" description="6">
    <location>
        <begin position="387"/>
        <end position="389"/>
    </location>
</feature>
<feature type="repeat" description="1">
    <location>
        <begin position="494"/>
        <end position="496"/>
    </location>
</feature>
<feature type="repeat" description="2">
    <location>
        <begin position="508"/>
        <end position="510"/>
    </location>
</feature>
<feature type="repeat" description="3">
    <location>
        <begin position="591"/>
        <end position="593"/>
    </location>
</feature>
<feature type="region of interest" description="Disordered" evidence="6">
    <location>
        <begin position="164"/>
        <end position="254"/>
    </location>
</feature>
<feature type="region of interest" description="Disordered" evidence="6">
    <location>
        <begin position="267"/>
        <end position="289"/>
    </location>
</feature>
<feature type="region of interest" description="Disordered" evidence="6">
    <location>
        <begin position="305"/>
        <end position="396"/>
    </location>
</feature>
<feature type="region of interest" description="6 X 3 AA repeats of [DE]-P-W">
    <location>
        <begin position="313"/>
        <end position="389"/>
    </location>
</feature>
<feature type="region of interest" description="Disordered" evidence="6">
    <location>
        <begin position="423"/>
        <end position="469"/>
    </location>
</feature>
<feature type="region of interest" description="3 X 3 AA repeats of N-P-F">
    <location>
        <begin position="494"/>
        <end position="593"/>
    </location>
</feature>
<feature type="compositionally biased region" description="Polar residues" evidence="6">
    <location>
        <begin position="164"/>
        <end position="183"/>
    </location>
</feature>
<feature type="compositionally biased region" description="Polar residues" evidence="6">
    <location>
        <begin position="197"/>
        <end position="216"/>
    </location>
</feature>
<feature type="compositionally biased region" description="Polar residues" evidence="6">
    <location>
        <begin position="235"/>
        <end position="245"/>
    </location>
</feature>
<feature type="compositionally biased region" description="Polar residues" evidence="6">
    <location>
        <begin position="306"/>
        <end position="337"/>
    </location>
</feature>
<feature type="compositionally biased region" description="Polar residues" evidence="6">
    <location>
        <begin position="358"/>
        <end position="367"/>
    </location>
</feature>
<feature type="compositionally biased region" description="Polar residues" evidence="6">
    <location>
        <begin position="374"/>
        <end position="384"/>
    </location>
</feature>
<feature type="compositionally biased region" description="Low complexity" evidence="6">
    <location>
        <begin position="449"/>
        <end position="460"/>
    </location>
</feature>
<feature type="binding site" evidence="1">
    <location>
        <position position="8"/>
    </location>
    <ligand>
        <name>a 1,2-diacyl-sn-glycero-3-phospho-(1D-myo-inositol-4,5-bisphosphate)</name>
        <dbReference type="ChEBI" id="CHEBI:58456"/>
    </ligand>
</feature>
<feature type="binding site" evidence="1">
    <location>
        <position position="11"/>
    </location>
    <ligand>
        <name>a 1,2-diacyl-sn-glycero-3-phospho-(1D-myo-inositol-4,5-bisphosphate)</name>
        <dbReference type="ChEBI" id="CHEBI:58456"/>
    </ligand>
</feature>
<feature type="binding site" evidence="1">
    <location>
        <position position="25"/>
    </location>
    <ligand>
        <name>a 1,2-diacyl-sn-glycero-3-phospho-(1D-myo-inositol-4,5-bisphosphate)</name>
        <dbReference type="ChEBI" id="CHEBI:58456"/>
    </ligand>
</feature>
<feature type="binding site" evidence="1">
    <location>
        <position position="30"/>
    </location>
    <ligand>
        <name>a 1,2-diacyl-sn-glycero-3-phospho-(1D-myo-inositol-4,5-bisphosphate)</name>
        <dbReference type="ChEBI" id="CHEBI:58456"/>
    </ligand>
</feature>
<feature type="binding site" evidence="1">
    <location>
        <position position="63"/>
    </location>
    <ligand>
        <name>a 1,2-diacyl-sn-glycero-3-phospho-(1D-myo-inositol-4,5-bisphosphate)</name>
        <dbReference type="ChEBI" id="CHEBI:58456"/>
    </ligand>
</feature>
<feature type="binding site" evidence="1">
    <location>
        <position position="73"/>
    </location>
    <ligand>
        <name>a 1,2-diacyl-sn-glycero-3-phospho-(1D-myo-inositol-4,5-bisphosphate)</name>
        <dbReference type="ChEBI" id="CHEBI:58456"/>
    </ligand>
</feature>
<feature type="modified residue" description="Omega-N-methylarginine" evidence="12">
    <location>
        <position position="170"/>
    </location>
</feature>
<feature type="modified residue" description="Phosphoserine" evidence="11">
    <location>
        <position position="173"/>
    </location>
</feature>
<feature type="modified residue" description="Phosphoserine" evidence="11">
    <location>
        <position position="192"/>
    </location>
</feature>
<feature type="modified residue" description="Phosphoserine" evidence="3">
    <location>
        <position position="195"/>
    </location>
</feature>
<feature type="modified residue" description="Phosphoserine" evidence="3">
    <location>
        <position position="443"/>
    </location>
</feature>
<feature type="modified residue" description="Phosphothreonine" evidence="3">
    <location>
        <position position="465"/>
    </location>
</feature>
<feature type="modified residue" description="Phosphoserine" evidence="2">
    <location>
        <position position="526"/>
    </location>
</feature>
<feature type="splice variant" id="VSP_009157" description="In isoform 2." evidence="8 9">
    <location>
        <begin position="237"/>
        <end position="248"/>
    </location>
</feature>
<feature type="sequence conflict" description="In Ref. 4; AAC97476." evidence="10" ref="4">
    <original>Y</original>
    <variation>S</variation>
    <location>
        <position position="75"/>
    </location>
</feature>
<dbReference type="EMBL" id="AK036331">
    <property type="protein sequence ID" value="BAC29387.1"/>
    <property type="molecule type" value="mRNA"/>
</dbReference>
<dbReference type="EMBL" id="AL604029">
    <property type="status" value="NOT_ANNOTATED_CDS"/>
    <property type="molecule type" value="Genomic_DNA"/>
</dbReference>
<dbReference type="EMBL" id="BC039138">
    <property type="protein sequence ID" value="AAH39138.1"/>
    <property type="molecule type" value="mRNA"/>
</dbReference>
<dbReference type="EMBL" id="AF057286">
    <property type="protein sequence ID" value="AAC97476.1"/>
    <property type="status" value="ALT_INIT"/>
    <property type="molecule type" value="mRNA"/>
</dbReference>
<dbReference type="CCDS" id="CCDS24816.1">
    <molecule id="Q8CHU3-1"/>
</dbReference>
<dbReference type="CCDS" id="CCDS56779.1">
    <molecule id="Q8CHU3-2"/>
</dbReference>
<dbReference type="RefSeq" id="NP_001239118.1">
    <molecule id="Q8CHU3-2"/>
    <property type="nucleotide sequence ID" value="NM_001252189.2"/>
</dbReference>
<dbReference type="RefSeq" id="NP_001349516.1">
    <molecule id="Q8CHU3-1"/>
    <property type="nucleotide sequence ID" value="NM_001362587.1"/>
</dbReference>
<dbReference type="RefSeq" id="NP_034278.1">
    <molecule id="Q8CHU3-1"/>
    <property type="nucleotide sequence ID" value="NM_010148.4"/>
</dbReference>
<dbReference type="RefSeq" id="XP_017169742.1">
    <property type="nucleotide sequence ID" value="XM_017314253.1"/>
</dbReference>
<dbReference type="RefSeq" id="XP_030101391.1">
    <molecule id="Q8CHU3-1"/>
    <property type="nucleotide sequence ID" value="XM_030245531.2"/>
</dbReference>
<dbReference type="RefSeq" id="XP_030101392.1">
    <molecule id="Q8CHU3-1"/>
    <property type="nucleotide sequence ID" value="XM_030245532.2"/>
</dbReference>
<dbReference type="RefSeq" id="XP_030101393.1">
    <molecule id="Q8CHU3-1"/>
    <property type="nucleotide sequence ID" value="XM_030245533.2"/>
</dbReference>
<dbReference type="RefSeq" id="XP_030101394.1">
    <molecule id="Q8CHU3-1"/>
    <property type="nucleotide sequence ID" value="XM_030245534.2"/>
</dbReference>
<dbReference type="RefSeq" id="XP_030101395.1">
    <molecule id="Q8CHU3-1"/>
    <property type="nucleotide sequence ID" value="XM_030245535.2"/>
</dbReference>
<dbReference type="RefSeq" id="XP_030101396.1">
    <molecule id="Q8CHU3-2"/>
    <property type="nucleotide sequence ID" value="XM_030245536.1"/>
</dbReference>
<dbReference type="RefSeq" id="XP_030101397.1">
    <molecule id="Q8CHU3-2"/>
    <property type="nucleotide sequence ID" value="XM_030245537.2"/>
</dbReference>
<dbReference type="RefSeq" id="XP_030101398.1">
    <molecule id="Q8CHU3-2"/>
    <property type="nucleotide sequence ID" value="XM_030245538.2"/>
</dbReference>
<dbReference type="RefSeq" id="XP_030101399.1">
    <molecule id="Q8CHU3-2"/>
    <property type="nucleotide sequence ID" value="XM_030245539.2"/>
</dbReference>
<dbReference type="RefSeq" id="XP_030101400.1">
    <molecule id="Q8CHU3-2"/>
    <property type="nucleotide sequence ID" value="XM_030245540.2"/>
</dbReference>
<dbReference type="RefSeq" id="XP_030101401.1">
    <molecule id="Q8CHU3-2"/>
    <property type="nucleotide sequence ID" value="XM_030245541.2"/>
</dbReference>
<dbReference type="RefSeq" id="XP_036012196.1">
    <molecule id="Q8CHU3-1"/>
    <property type="nucleotide sequence ID" value="XM_036156303.1"/>
</dbReference>
<dbReference type="RefSeq" id="XP_036012197.1">
    <molecule id="Q8CHU3-1"/>
    <property type="nucleotide sequence ID" value="XM_036156304.1"/>
</dbReference>
<dbReference type="RefSeq" id="XP_036012198.1">
    <molecule id="Q8CHU3-2"/>
    <property type="nucleotide sequence ID" value="XM_036156305.1"/>
</dbReference>
<dbReference type="RefSeq" id="XP_036012199.1">
    <molecule id="Q8CHU3-2"/>
    <property type="nucleotide sequence ID" value="XM_036156306.1"/>
</dbReference>
<dbReference type="RefSeq" id="XP_036012200.1">
    <molecule id="Q8CHU3-2"/>
    <property type="nucleotide sequence ID" value="XM_036156307.1"/>
</dbReference>
<dbReference type="RefSeq" id="XP_036012201.1">
    <molecule id="Q8CHU3-2"/>
    <property type="nucleotide sequence ID" value="XM_036156308.1"/>
</dbReference>
<dbReference type="RefSeq" id="XP_036012202.1">
    <molecule id="Q8CHU3-2"/>
    <property type="nucleotide sequence ID" value="XM_036156309.1"/>
</dbReference>
<dbReference type="RefSeq" id="XP_036012203.1">
    <molecule id="Q8CHU3-2"/>
    <property type="nucleotide sequence ID" value="XM_036156310.1"/>
</dbReference>
<dbReference type="RefSeq" id="XP_036012204.1">
    <molecule id="Q8CHU3-2"/>
    <property type="nucleotide sequence ID" value="XM_036156311.1"/>
</dbReference>
<dbReference type="SMR" id="Q8CHU3"/>
<dbReference type="BioGRID" id="199486">
    <property type="interactions" value="10"/>
</dbReference>
<dbReference type="ELM" id="Q8CHU3"/>
<dbReference type="FunCoup" id="Q8CHU3">
    <property type="interactions" value="1452"/>
</dbReference>
<dbReference type="IntAct" id="Q8CHU3">
    <property type="interactions" value="1"/>
</dbReference>
<dbReference type="MINT" id="Q8CHU3"/>
<dbReference type="STRING" id="10090.ENSMUSP00000136950"/>
<dbReference type="GlyGen" id="Q8CHU3">
    <property type="glycosylation" value="4 sites, 1 O-linked glycan (3 sites)"/>
</dbReference>
<dbReference type="iPTMnet" id="Q8CHU3"/>
<dbReference type="PhosphoSitePlus" id="Q8CHU3"/>
<dbReference type="SwissPalm" id="Q8CHU3"/>
<dbReference type="jPOST" id="Q8CHU3"/>
<dbReference type="PaxDb" id="10090-ENSMUSP00000001063"/>
<dbReference type="PeptideAtlas" id="Q8CHU3"/>
<dbReference type="ProteomicsDB" id="275634">
    <molecule id="Q8CHU3-1"/>
</dbReference>
<dbReference type="ProteomicsDB" id="275635">
    <molecule id="Q8CHU3-2"/>
</dbReference>
<dbReference type="Pumba" id="Q8CHU3"/>
<dbReference type="Antibodypedia" id="25881">
    <property type="antibodies" value="350 antibodies from 27 providers"/>
</dbReference>
<dbReference type="DNASU" id="13855"/>
<dbReference type="Ensembl" id="ENSMUST00000001063.15">
    <molecule id="Q8CHU3-1"/>
    <property type="protein sequence ID" value="ENSMUSP00000001063.9"/>
    <property type="gene ID" value="ENSMUSG00000001036.18"/>
</dbReference>
<dbReference type="Ensembl" id="ENSMUST00000108713.8">
    <molecule id="Q8CHU3-2"/>
    <property type="protein sequence ID" value="ENSMUSP00000104353.2"/>
    <property type="gene ID" value="ENSMUSG00000001036.18"/>
</dbReference>
<dbReference type="Ensembl" id="ENSMUST00000178202.8">
    <molecule id="Q8CHU3-1"/>
    <property type="protein sequence ID" value="ENSMUSP00000136553.2"/>
    <property type="gene ID" value="ENSMUSG00000001036.18"/>
</dbReference>
<dbReference type="GeneID" id="13855"/>
<dbReference type="KEGG" id="mmu:13855"/>
<dbReference type="UCSC" id="uc007jhv.2">
    <molecule id="Q8CHU3-1"/>
    <property type="organism name" value="mouse"/>
</dbReference>
<dbReference type="AGR" id="MGI:1333766"/>
<dbReference type="CTD" id="22905"/>
<dbReference type="MGI" id="MGI:1333766">
    <property type="gene designation" value="Epn2"/>
</dbReference>
<dbReference type="VEuPathDB" id="HostDB:ENSMUSG00000001036"/>
<dbReference type="eggNOG" id="KOG2056">
    <property type="taxonomic scope" value="Eukaryota"/>
</dbReference>
<dbReference type="GeneTree" id="ENSGT00940000157239"/>
<dbReference type="HOGENOM" id="CLU_012678_4_2_1"/>
<dbReference type="InParanoid" id="Q8CHU3"/>
<dbReference type="OrthoDB" id="4033880at2759"/>
<dbReference type="PhylomeDB" id="Q8CHU3"/>
<dbReference type="TreeFam" id="TF313361"/>
<dbReference type="Reactome" id="R-MMU-8856825">
    <property type="pathway name" value="Cargo recognition for clathrin-mediated endocytosis"/>
</dbReference>
<dbReference type="Reactome" id="R-MMU-8856828">
    <property type="pathway name" value="Clathrin-mediated endocytosis"/>
</dbReference>
<dbReference type="BioGRID-ORCS" id="13855">
    <property type="hits" value="3 hits in 76 CRISPR screens"/>
</dbReference>
<dbReference type="CD-CODE" id="CE726F99">
    <property type="entry name" value="Postsynaptic density"/>
</dbReference>
<dbReference type="ChiTaRS" id="Epn2">
    <property type="organism name" value="mouse"/>
</dbReference>
<dbReference type="PRO" id="PR:Q8CHU3"/>
<dbReference type="Proteomes" id="UP000000589">
    <property type="component" value="Chromosome 11"/>
</dbReference>
<dbReference type="RNAct" id="Q8CHU3">
    <property type="molecule type" value="protein"/>
</dbReference>
<dbReference type="Bgee" id="ENSMUSG00000001036">
    <property type="expression patterns" value="Expressed in animal zygote and 258 other cell types or tissues"/>
</dbReference>
<dbReference type="ExpressionAtlas" id="Q8CHU3">
    <property type="expression patterns" value="baseline and differential"/>
</dbReference>
<dbReference type="GO" id="GO:0005737">
    <property type="term" value="C:cytoplasm"/>
    <property type="evidence" value="ECO:0007669"/>
    <property type="project" value="UniProtKB-SubCell"/>
</dbReference>
<dbReference type="GO" id="GO:0008289">
    <property type="term" value="F:lipid binding"/>
    <property type="evidence" value="ECO:0007669"/>
    <property type="project" value="UniProtKB-KW"/>
</dbReference>
<dbReference type="GO" id="GO:0048568">
    <property type="term" value="P:embryonic organ development"/>
    <property type="evidence" value="ECO:0000316"/>
    <property type="project" value="MGI"/>
</dbReference>
<dbReference type="GO" id="GO:0006897">
    <property type="term" value="P:endocytosis"/>
    <property type="evidence" value="ECO:0007669"/>
    <property type="project" value="UniProtKB-KW"/>
</dbReference>
<dbReference type="GO" id="GO:0001701">
    <property type="term" value="P:in utero embryonic development"/>
    <property type="evidence" value="ECO:0000316"/>
    <property type="project" value="MGI"/>
</dbReference>
<dbReference type="GO" id="GO:0007219">
    <property type="term" value="P:Notch signaling pathway"/>
    <property type="evidence" value="ECO:0000316"/>
    <property type="project" value="MGI"/>
</dbReference>
<dbReference type="CDD" id="cd16990">
    <property type="entry name" value="ENTH_Epsin"/>
    <property type="match status" value="1"/>
</dbReference>
<dbReference type="FunFam" id="1.25.40.90:FF:000002">
    <property type="entry name" value="epsin-2 isoform X1"/>
    <property type="match status" value="1"/>
</dbReference>
<dbReference type="Gene3D" id="1.25.40.90">
    <property type="match status" value="1"/>
</dbReference>
<dbReference type="InterPro" id="IPR013809">
    <property type="entry name" value="ENTH"/>
</dbReference>
<dbReference type="InterPro" id="IPR008942">
    <property type="entry name" value="ENTH_VHS"/>
</dbReference>
<dbReference type="InterPro" id="IPR003903">
    <property type="entry name" value="UIM_dom"/>
</dbReference>
<dbReference type="PANTHER" id="PTHR12276:SF50">
    <property type="entry name" value="EPSIN-2"/>
    <property type="match status" value="1"/>
</dbReference>
<dbReference type="PANTHER" id="PTHR12276">
    <property type="entry name" value="EPSIN/ENT-RELATED"/>
    <property type="match status" value="1"/>
</dbReference>
<dbReference type="Pfam" id="PF01417">
    <property type="entry name" value="ENTH"/>
    <property type="match status" value="1"/>
</dbReference>
<dbReference type="SMART" id="SM00273">
    <property type="entry name" value="ENTH"/>
    <property type="match status" value="1"/>
</dbReference>
<dbReference type="SMART" id="SM00726">
    <property type="entry name" value="UIM"/>
    <property type="match status" value="2"/>
</dbReference>
<dbReference type="SUPFAM" id="SSF48464">
    <property type="entry name" value="ENTH/VHS domain"/>
    <property type="match status" value="1"/>
</dbReference>
<dbReference type="PROSITE" id="PS50942">
    <property type="entry name" value="ENTH"/>
    <property type="match status" value="1"/>
</dbReference>
<dbReference type="PROSITE" id="PS50330">
    <property type="entry name" value="UIM"/>
    <property type="match status" value="2"/>
</dbReference>
<reference key="1">
    <citation type="journal article" date="2005" name="Science">
        <title>The transcriptional landscape of the mammalian genome.</title>
        <authorList>
            <person name="Carninci P."/>
            <person name="Kasukawa T."/>
            <person name="Katayama S."/>
            <person name="Gough J."/>
            <person name="Frith M.C."/>
            <person name="Maeda N."/>
            <person name="Oyama R."/>
            <person name="Ravasi T."/>
            <person name="Lenhard B."/>
            <person name="Wells C."/>
            <person name="Kodzius R."/>
            <person name="Shimokawa K."/>
            <person name="Bajic V.B."/>
            <person name="Brenner S.E."/>
            <person name="Batalov S."/>
            <person name="Forrest A.R."/>
            <person name="Zavolan M."/>
            <person name="Davis M.J."/>
            <person name="Wilming L.G."/>
            <person name="Aidinis V."/>
            <person name="Allen J.E."/>
            <person name="Ambesi-Impiombato A."/>
            <person name="Apweiler R."/>
            <person name="Aturaliya R.N."/>
            <person name="Bailey T.L."/>
            <person name="Bansal M."/>
            <person name="Baxter L."/>
            <person name="Beisel K.W."/>
            <person name="Bersano T."/>
            <person name="Bono H."/>
            <person name="Chalk A.M."/>
            <person name="Chiu K.P."/>
            <person name="Choudhary V."/>
            <person name="Christoffels A."/>
            <person name="Clutterbuck D.R."/>
            <person name="Crowe M.L."/>
            <person name="Dalla E."/>
            <person name="Dalrymple B.P."/>
            <person name="de Bono B."/>
            <person name="Della Gatta G."/>
            <person name="di Bernardo D."/>
            <person name="Down T."/>
            <person name="Engstrom P."/>
            <person name="Fagiolini M."/>
            <person name="Faulkner G."/>
            <person name="Fletcher C.F."/>
            <person name="Fukushima T."/>
            <person name="Furuno M."/>
            <person name="Futaki S."/>
            <person name="Gariboldi M."/>
            <person name="Georgii-Hemming P."/>
            <person name="Gingeras T.R."/>
            <person name="Gojobori T."/>
            <person name="Green R.E."/>
            <person name="Gustincich S."/>
            <person name="Harbers M."/>
            <person name="Hayashi Y."/>
            <person name="Hensch T.K."/>
            <person name="Hirokawa N."/>
            <person name="Hill D."/>
            <person name="Huminiecki L."/>
            <person name="Iacono M."/>
            <person name="Ikeo K."/>
            <person name="Iwama A."/>
            <person name="Ishikawa T."/>
            <person name="Jakt M."/>
            <person name="Kanapin A."/>
            <person name="Katoh M."/>
            <person name="Kawasawa Y."/>
            <person name="Kelso J."/>
            <person name="Kitamura H."/>
            <person name="Kitano H."/>
            <person name="Kollias G."/>
            <person name="Krishnan S.P."/>
            <person name="Kruger A."/>
            <person name="Kummerfeld S.K."/>
            <person name="Kurochkin I.V."/>
            <person name="Lareau L.F."/>
            <person name="Lazarevic D."/>
            <person name="Lipovich L."/>
            <person name="Liu J."/>
            <person name="Liuni S."/>
            <person name="McWilliam S."/>
            <person name="Madan Babu M."/>
            <person name="Madera M."/>
            <person name="Marchionni L."/>
            <person name="Matsuda H."/>
            <person name="Matsuzawa S."/>
            <person name="Miki H."/>
            <person name="Mignone F."/>
            <person name="Miyake S."/>
            <person name="Morris K."/>
            <person name="Mottagui-Tabar S."/>
            <person name="Mulder N."/>
            <person name="Nakano N."/>
            <person name="Nakauchi H."/>
            <person name="Ng P."/>
            <person name="Nilsson R."/>
            <person name="Nishiguchi S."/>
            <person name="Nishikawa S."/>
            <person name="Nori F."/>
            <person name="Ohara O."/>
            <person name="Okazaki Y."/>
            <person name="Orlando V."/>
            <person name="Pang K.C."/>
            <person name="Pavan W.J."/>
            <person name="Pavesi G."/>
            <person name="Pesole G."/>
            <person name="Petrovsky N."/>
            <person name="Piazza S."/>
            <person name="Reed J."/>
            <person name="Reid J.F."/>
            <person name="Ring B.Z."/>
            <person name="Ringwald M."/>
            <person name="Rost B."/>
            <person name="Ruan Y."/>
            <person name="Salzberg S.L."/>
            <person name="Sandelin A."/>
            <person name="Schneider C."/>
            <person name="Schoenbach C."/>
            <person name="Sekiguchi K."/>
            <person name="Semple C.A."/>
            <person name="Seno S."/>
            <person name="Sessa L."/>
            <person name="Sheng Y."/>
            <person name="Shibata Y."/>
            <person name="Shimada H."/>
            <person name="Shimada K."/>
            <person name="Silva D."/>
            <person name="Sinclair B."/>
            <person name="Sperling S."/>
            <person name="Stupka E."/>
            <person name="Sugiura K."/>
            <person name="Sultana R."/>
            <person name="Takenaka Y."/>
            <person name="Taki K."/>
            <person name="Tammoja K."/>
            <person name="Tan S.L."/>
            <person name="Tang S."/>
            <person name="Taylor M.S."/>
            <person name="Tegner J."/>
            <person name="Teichmann S.A."/>
            <person name="Ueda H.R."/>
            <person name="van Nimwegen E."/>
            <person name="Verardo R."/>
            <person name="Wei C.L."/>
            <person name="Yagi K."/>
            <person name="Yamanishi H."/>
            <person name="Zabarovsky E."/>
            <person name="Zhu S."/>
            <person name="Zimmer A."/>
            <person name="Hide W."/>
            <person name="Bult C."/>
            <person name="Grimmond S.M."/>
            <person name="Teasdale R.D."/>
            <person name="Liu E.T."/>
            <person name="Brusic V."/>
            <person name="Quackenbush J."/>
            <person name="Wahlestedt C."/>
            <person name="Mattick J.S."/>
            <person name="Hume D.A."/>
            <person name="Kai C."/>
            <person name="Sasaki D."/>
            <person name="Tomaru Y."/>
            <person name="Fukuda S."/>
            <person name="Kanamori-Katayama M."/>
            <person name="Suzuki M."/>
            <person name="Aoki J."/>
            <person name="Arakawa T."/>
            <person name="Iida J."/>
            <person name="Imamura K."/>
            <person name="Itoh M."/>
            <person name="Kato T."/>
            <person name="Kawaji H."/>
            <person name="Kawagashira N."/>
            <person name="Kawashima T."/>
            <person name="Kojima M."/>
            <person name="Kondo S."/>
            <person name="Konno H."/>
            <person name="Nakano K."/>
            <person name="Ninomiya N."/>
            <person name="Nishio T."/>
            <person name="Okada M."/>
            <person name="Plessy C."/>
            <person name="Shibata K."/>
            <person name="Shiraki T."/>
            <person name="Suzuki S."/>
            <person name="Tagami M."/>
            <person name="Waki K."/>
            <person name="Watahiki A."/>
            <person name="Okamura-Oho Y."/>
            <person name="Suzuki H."/>
            <person name="Kawai J."/>
            <person name="Hayashizaki Y."/>
        </authorList>
    </citation>
    <scope>NUCLEOTIDE SEQUENCE [LARGE SCALE MRNA] (ISOFORM 2)</scope>
    <source>
        <strain>C57BL/6J</strain>
        <tissue>Cerebellum</tissue>
    </source>
</reference>
<reference key="2">
    <citation type="journal article" date="2009" name="PLoS Biol.">
        <title>Lineage-specific biology revealed by a finished genome assembly of the mouse.</title>
        <authorList>
            <person name="Church D.M."/>
            <person name="Goodstadt L."/>
            <person name="Hillier L.W."/>
            <person name="Zody M.C."/>
            <person name="Goldstein S."/>
            <person name="She X."/>
            <person name="Bult C.J."/>
            <person name="Agarwala R."/>
            <person name="Cherry J.L."/>
            <person name="DiCuccio M."/>
            <person name="Hlavina W."/>
            <person name="Kapustin Y."/>
            <person name="Meric P."/>
            <person name="Maglott D."/>
            <person name="Birtle Z."/>
            <person name="Marques A.C."/>
            <person name="Graves T."/>
            <person name="Zhou S."/>
            <person name="Teague B."/>
            <person name="Potamousis K."/>
            <person name="Churas C."/>
            <person name="Place M."/>
            <person name="Herschleb J."/>
            <person name="Runnheim R."/>
            <person name="Forrest D."/>
            <person name="Amos-Landgraf J."/>
            <person name="Schwartz D.C."/>
            <person name="Cheng Z."/>
            <person name="Lindblad-Toh K."/>
            <person name="Eichler E.E."/>
            <person name="Ponting C.P."/>
        </authorList>
    </citation>
    <scope>NUCLEOTIDE SEQUENCE [LARGE SCALE GENOMIC DNA]</scope>
    <source>
        <strain>C57BL/6J</strain>
    </source>
</reference>
<reference key="3">
    <citation type="journal article" date="2004" name="Genome Res.">
        <title>The status, quality, and expansion of the NIH full-length cDNA project: the Mammalian Gene Collection (MGC).</title>
        <authorList>
            <consortium name="The MGC Project Team"/>
        </authorList>
    </citation>
    <scope>NUCLEOTIDE SEQUENCE [LARGE SCALE MRNA] (ISOFORM 1)</scope>
    <source>
        <strain>FVB/N</strain>
        <tissue>Mammary tumor</tissue>
    </source>
</reference>
<reference key="4">
    <citation type="journal article" date="1998" name="J. Biol. Chem.">
        <title>Intersectin, a novel adaptor protein with two eps15 homology and five src homology 3 domains.</title>
        <authorList>
            <person name="Yamabhai M."/>
            <person name="Hoffman N.G."/>
            <person name="Hardison N.L."/>
            <person name="McPherson P.S."/>
            <person name="Castagnoli L."/>
            <person name="Cesareni G."/>
            <person name="Kay B.K."/>
        </authorList>
    </citation>
    <scope>NUCLEOTIDE SEQUENCE [MRNA] OF 75-595 (ISOFORM 2)</scope>
    <scope>INTERACTION WITH ITSN1</scope>
</reference>
<reference key="5">
    <citation type="submission" date="2009-01" db="UniProtKB">
        <authorList>
            <person name="Lubec G."/>
            <person name="Sunyer B."/>
            <person name="Chen W.-Q."/>
        </authorList>
    </citation>
    <scope>PROTEIN SEQUENCE OF 77-86</scope>
    <scope>IDENTIFICATION BY MASS SPECTROMETRY</scope>
    <source>
        <strain>OF1</strain>
        <tissue>Hippocampus</tissue>
    </source>
</reference>
<reference key="6">
    <citation type="journal article" date="2004" name="Mol. Cell. Proteomics">
        <title>Phosphoproteomic analysis of the developing mouse brain.</title>
        <authorList>
            <person name="Ballif B.A."/>
            <person name="Villen J."/>
            <person name="Beausoleil S.A."/>
            <person name="Schwartz D."/>
            <person name="Gygi S.P."/>
        </authorList>
    </citation>
    <scope>IDENTIFICATION BY MASS SPECTROMETRY [LARGE SCALE ANALYSIS]</scope>
    <source>
        <tissue>Embryonic brain</tissue>
    </source>
</reference>
<reference key="7">
    <citation type="journal article" date="2010" name="Cell">
        <title>A tissue-specific atlas of mouse protein phosphorylation and expression.</title>
        <authorList>
            <person name="Huttlin E.L."/>
            <person name="Jedrychowski M.P."/>
            <person name="Elias J.E."/>
            <person name="Goswami T."/>
            <person name="Rad R."/>
            <person name="Beausoleil S.A."/>
            <person name="Villen J."/>
            <person name="Haas W."/>
            <person name="Sowa M.E."/>
            <person name="Gygi S.P."/>
        </authorList>
    </citation>
    <scope>PHOSPHORYLATION [LARGE SCALE ANALYSIS] AT SER-173 AND SER-192</scope>
    <scope>IDENTIFICATION BY MASS SPECTROMETRY [LARGE SCALE ANALYSIS]</scope>
    <source>
        <tissue>Brain</tissue>
        <tissue>Brown adipose tissue</tissue>
        <tissue>Heart</tissue>
        <tissue>Kidney</tissue>
        <tissue>Liver</tissue>
        <tissue>Lung</tissue>
        <tissue>Pancreas</tissue>
        <tissue>Spleen</tissue>
        <tissue>Testis</tissue>
    </source>
</reference>
<reference key="8">
    <citation type="journal article" date="2014" name="Mol. Cell. Proteomics">
        <title>Immunoaffinity enrichment and mass spectrometry analysis of protein methylation.</title>
        <authorList>
            <person name="Guo A."/>
            <person name="Gu H."/>
            <person name="Zhou J."/>
            <person name="Mulhern D."/>
            <person name="Wang Y."/>
            <person name="Lee K.A."/>
            <person name="Yang V."/>
            <person name="Aguiar M."/>
            <person name="Kornhauser J."/>
            <person name="Jia X."/>
            <person name="Ren J."/>
            <person name="Beausoleil S.A."/>
            <person name="Silva J.C."/>
            <person name="Vemulapalli V."/>
            <person name="Bedford M.T."/>
            <person name="Comb M.J."/>
        </authorList>
    </citation>
    <scope>METHYLATION [LARGE SCALE ANALYSIS] AT ARG-170</scope>
    <scope>IDENTIFICATION BY MASS SPECTROMETRY [LARGE SCALE ANALYSIS]</scope>
    <source>
        <tissue>Brain</tissue>
    </source>
</reference>
<proteinExistence type="evidence at protein level"/>
<comment type="function">
    <text evidence="1">Plays a role in the formation of clathrin-coated invaginations and endocytosis.</text>
</comment>
<comment type="subunit">
    <text evidence="2 3 7">Binds EPS15, AP-2 and clathrin (By similarity). Interacts with UBQLN2 (By similarity). Interacts with ITSN1.</text>
</comment>
<comment type="subcellular location">
    <subcellularLocation>
        <location evidence="1">Cytoplasm</location>
    </subcellularLocation>
    <text evidence="1">In punctate structures throughout the cell and particularly concentrated in the region of the Golgi complex.</text>
</comment>
<comment type="alternative products">
    <event type="alternative splicing"/>
    <isoform>
        <id>Q8CHU3-1</id>
        <name>1</name>
        <sequence type="displayed"/>
    </isoform>
    <isoform>
        <id>Q8CHU3-2</id>
        <name>2</name>
        <sequence type="described" ref="VSP_009157"/>
    </isoform>
</comment>
<comment type="domain">
    <text>The NPF repeat domain is involved in EPS15 binding.</text>
</comment>
<comment type="domain">
    <text>The DPW repeat domain is involved in AP-2 and clathrin binding.</text>
</comment>
<comment type="PTM">
    <text evidence="1">Ubiquitinated.</text>
</comment>
<comment type="similarity">
    <text evidence="10">Belongs to the epsin family.</text>
</comment>
<comment type="sequence caution" evidence="10">
    <conflict type="erroneous initiation">
        <sequence resource="EMBL-CDS" id="AAC97476"/>
    </conflict>
</comment>
<evidence type="ECO:0000250" key="1"/>
<evidence type="ECO:0000250" key="2">
    <source>
        <dbReference type="UniProtKB" id="O95208"/>
    </source>
</evidence>
<evidence type="ECO:0000250" key="3">
    <source>
        <dbReference type="UniProtKB" id="Q9Z1Z3"/>
    </source>
</evidence>
<evidence type="ECO:0000255" key="4">
    <source>
        <dbReference type="PROSITE-ProRule" id="PRU00213"/>
    </source>
</evidence>
<evidence type="ECO:0000255" key="5">
    <source>
        <dbReference type="PROSITE-ProRule" id="PRU00243"/>
    </source>
</evidence>
<evidence type="ECO:0000256" key="6">
    <source>
        <dbReference type="SAM" id="MobiDB-lite"/>
    </source>
</evidence>
<evidence type="ECO:0000269" key="7">
    <source>
    </source>
</evidence>
<evidence type="ECO:0000303" key="8">
    <source>
    </source>
</evidence>
<evidence type="ECO:0000303" key="9">
    <source>
    </source>
</evidence>
<evidence type="ECO:0000305" key="10"/>
<evidence type="ECO:0007744" key="11">
    <source>
    </source>
</evidence>
<evidence type="ECO:0007744" key="12">
    <source>
    </source>
</evidence>
<protein>
    <recommendedName>
        <fullName>Epsin-2</fullName>
    </recommendedName>
    <alternativeName>
        <fullName>EPS-15-interacting protein 2</fullName>
    </alternativeName>
    <alternativeName>
        <fullName>Intersectin-EH-binding protein 2</fullName>
        <shortName>Ibp2</shortName>
    </alternativeName>
</protein>
<accession>Q8CHU3</accession>
<accession>O70447</accession>
<accession>Q5NCM4</accession>
<accession>Q8BZ85</accession>
<name>EPN2_MOUSE</name>
<gene>
    <name type="primary">Epn2</name>
</gene>
<organism>
    <name type="scientific">Mus musculus</name>
    <name type="common">Mouse</name>
    <dbReference type="NCBI Taxonomy" id="10090"/>
    <lineage>
        <taxon>Eukaryota</taxon>
        <taxon>Metazoa</taxon>
        <taxon>Chordata</taxon>
        <taxon>Craniata</taxon>
        <taxon>Vertebrata</taxon>
        <taxon>Euteleostomi</taxon>
        <taxon>Mammalia</taxon>
        <taxon>Eutheria</taxon>
        <taxon>Euarchontoglires</taxon>
        <taxon>Glires</taxon>
        <taxon>Rodentia</taxon>
        <taxon>Myomorpha</taxon>
        <taxon>Muroidea</taxon>
        <taxon>Muridae</taxon>
        <taxon>Murinae</taxon>
        <taxon>Mus</taxon>
        <taxon>Mus</taxon>
    </lineage>
</organism>